<evidence type="ECO:0000255" key="1">
    <source>
        <dbReference type="HAMAP-Rule" id="MF_01659"/>
    </source>
</evidence>
<dbReference type="EC" id="2.2.1.9" evidence="1"/>
<dbReference type="EMBL" id="CU928161">
    <property type="protein sequence ID" value="CAR03694.1"/>
    <property type="molecule type" value="Genomic_DNA"/>
</dbReference>
<dbReference type="RefSeq" id="WP_000116370.1">
    <property type="nucleotide sequence ID" value="NC_011742.1"/>
</dbReference>
<dbReference type="SMR" id="B7MG32"/>
<dbReference type="KEGG" id="ecz:ECS88_2415"/>
<dbReference type="HOGENOM" id="CLU_006051_3_0_6"/>
<dbReference type="UniPathway" id="UPA00079"/>
<dbReference type="UniPathway" id="UPA01057">
    <property type="reaction ID" value="UER00164"/>
</dbReference>
<dbReference type="Proteomes" id="UP000000747">
    <property type="component" value="Chromosome"/>
</dbReference>
<dbReference type="GO" id="GO:0070204">
    <property type="term" value="F:2-succinyl-5-enolpyruvyl-6-hydroxy-3-cyclohexene-1-carboxylic-acid synthase activity"/>
    <property type="evidence" value="ECO:0007669"/>
    <property type="project" value="UniProtKB-UniRule"/>
</dbReference>
<dbReference type="GO" id="GO:0000287">
    <property type="term" value="F:magnesium ion binding"/>
    <property type="evidence" value="ECO:0007669"/>
    <property type="project" value="UniProtKB-UniRule"/>
</dbReference>
<dbReference type="GO" id="GO:0030145">
    <property type="term" value="F:manganese ion binding"/>
    <property type="evidence" value="ECO:0007669"/>
    <property type="project" value="UniProtKB-UniRule"/>
</dbReference>
<dbReference type="GO" id="GO:0030976">
    <property type="term" value="F:thiamine pyrophosphate binding"/>
    <property type="evidence" value="ECO:0007669"/>
    <property type="project" value="UniProtKB-UniRule"/>
</dbReference>
<dbReference type="GO" id="GO:0009234">
    <property type="term" value="P:menaquinone biosynthetic process"/>
    <property type="evidence" value="ECO:0007669"/>
    <property type="project" value="UniProtKB-UniRule"/>
</dbReference>
<dbReference type="CDD" id="cd07037">
    <property type="entry name" value="TPP_PYR_MenD"/>
    <property type="match status" value="1"/>
</dbReference>
<dbReference type="CDD" id="cd02009">
    <property type="entry name" value="TPP_SHCHC_synthase"/>
    <property type="match status" value="1"/>
</dbReference>
<dbReference type="FunFam" id="3.40.50.1220:FF:000010">
    <property type="entry name" value="2-succinyl-5-enolpyruvyl-6-hydroxy-3-cyclohexene-1-carboxylate synthase"/>
    <property type="match status" value="1"/>
</dbReference>
<dbReference type="FunFam" id="3.40.50.970:FF:000029">
    <property type="entry name" value="2-succinyl-5-enolpyruvyl-6-hydroxy-3-cyclohexene-1-carboxylate synthase"/>
    <property type="match status" value="1"/>
</dbReference>
<dbReference type="Gene3D" id="3.40.50.970">
    <property type="match status" value="2"/>
</dbReference>
<dbReference type="Gene3D" id="3.40.50.1220">
    <property type="entry name" value="TPP-binding domain"/>
    <property type="match status" value="1"/>
</dbReference>
<dbReference type="HAMAP" id="MF_01659">
    <property type="entry name" value="MenD"/>
    <property type="match status" value="1"/>
</dbReference>
<dbReference type="InterPro" id="IPR004433">
    <property type="entry name" value="MenaQ_synth_MenD"/>
</dbReference>
<dbReference type="InterPro" id="IPR032264">
    <property type="entry name" value="MenD_middle"/>
</dbReference>
<dbReference type="InterPro" id="IPR029061">
    <property type="entry name" value="THDP-binding"/>
</dbReference>
<dbReference type="InterPro" id="IPR012001">
    <property type="entry name" value="Thiamin_PyroP_enz_TPP-bd_dom"/>
</dbReference>
<dbReference type="InterPro" id="IPR011766">
    <property type="entry name" value="TPP_enzyme_TPP-bd"/>
</dbReference>
<dbReference type="NCBIfam" id="TIGR00173">
    <property type="entry name" value="menD"/>
    <property type="match status" value="1"/>
</dbReference>
<dbReference type="PANTHER" id="PTHR42916">
    <property type="entry name" value="2-SUCCINYL-5-ENOLPYRUVYL-6-HYDROXY-3-CYCLOHEXENE-1-CARBOXYLATE SYNTHASE"/>
    <property type="match status" value="1"/>
</dbReference>
<dbReference type="PANTHER" id="PTHR42916:SF1">
    <property type="entry name" value="PROTEIN PHYLLO, CHLOROPLASTIC"/>
    <property type="match status" value="1"/>
</dbReference>
<dbReference type="Pfam" id="PF02775">
    <property type="entry name" value="TPP_enzyme_C"/>
    <property type="match status" value="1"/>
</dbReference>
<dbReference type="Pfam" id="PF16582">
    <property type="entry name" value="TPP_enzyme_M_2"/>
    <property type="match status" value="1"/>
</dbReference>
<dbReference type="Pfam" id="PF02776">
    <property type="entry name" value="TPP_enzyme_N"/>
    <property type="match status" value="1"/>
</dbReference>
<dbReference type="PIRSF" id="PIRSF004983">
    <property type="entry name" value="MenD"/>
    <property type="match status" value="1"/>
</dbReference>
<dbReference type="SUPFAM" id="SSF52518">
    <property type="entry name" value="Thiamin diphosphate-binding fold (THDP-binding)"/>
    <property type="match status" value="2"/>
</dbReference>
<organism>
    <name type="scientific">Escherichia coli O45:K1 (strain S88 / ExPEC)</name>
    <dbReference type="NCBI Taxonomy" id="585035"/>
    <lineage>
        <taxon>Bacteria</taxon>
        <taxon>Pseudomonadati</taxon>
        <taxon>Pseudomonadota</taxon>
        <taxon>Gammaproteobacteria</taxon>
        <taxon>Enterobacterales</taxon>
        <taxon>Enterobacteriaceae</taxon>
        <taxon>Escherichia</taxon>
    </lineage>
</organism>
<gene>
    <name evidence="1" type="primary">menD</name>
    <name type="ordered locus">ECS88_2415</name>
</gene>
<name>MEND_ECO45</name>
<proteinExistence type="inferred from homology"/>
<sequence>MSVSAFNRRWAAVILEALTRHGVRHICIAPGSRSTPLTLAAAENSAFIHHTHFDERGLGHLALGLAKVSKQPVAVIVTSGTAVANLYPALIEAGLTGEKLILLTADRPPELIDCGANQAIRQPGMFASHPTHSISLPRPTQDIPARWLVSTIDHALGTLHAGGVHINCPFAEPLYGEMDDTGISWQQRLGDWWQDDKPWLREAPRRESEKQRDWFFWRQKRGVVVAGRMSAEEGKKVALWAQTLGWPLIGDVLSQTGQPLPCADLWLGNAKATSELQQAQIVVQLGSSLTGKRLLQWQASCEPEEYWIVDDIEGRLDPAHHRGRRLIANIADWLELHPAEKRQPWCVEIPRLAEQAMQAVIARRDAFGEAQLAHRISDYLPEQGQLFVGNSLVVRLIDALSQLPAGYPVYSNRGASGIDGLLSTAAGVQRASGKPTLAIVGDLSALYDLNALALLRQVSAPLVLIVVNNNGGQIFSLLPTPKSERERFYLMPQNVHFEHAAAMFELKYHRPQNWQELETTLVDAWRTPTTTVIEMVVNDTDGAQTLQQLLAQVSHL</sequence>
<accession>B7MG32</accession>
<keyword id="KW-0460">Magnesium</keyword>
<keyword id="KW-0464">Manganese</keyword>
<keyword id="KW-0474">Menaquinone biosynthesis</keyword>
<keyword id="KW-0479">Metal-binding</keyword>
<keyword id="KW-1185">Reference proteome</keyword>
<keyword id="KW-0786">Thiamine pyrophosphate</keyword>
<keyword id="KW-0808">Transferase</keyword>
<protein>
    <recommendedName>
        <fullName evidence="1">2-succinyl-5-enolpyruvyl-6-hydroxy-3-cyclohexene-1-carboxylate synthase</fullName>
        <shortName evidence="1">SEPHCHC synthase</shortName>
        <ecNumber evidence="1">2.2.1.9</ecNumber>
    </recommendedName>
    <alternativeName>
        <fullName evidence="1">Menaquinone biosynthesis protein MenD</fullName>
    </alternativeName>
</protein>
<reference key="1">
    <citation type="journal article" date="2009" name="PLoS Genet.">
        <title>Organised genome dynamics in the Escherichia coli species results in highly diverse adaptive paths.</title>
        <authorList>
            <person name="Touchon M."/>
            <person name="Hoede C."/>
            <person name="Tenaillon O."/>
            <person name="Barbe V."/>
            <person name="Baeriswyl S."/>
            <person name="Bidet P."/>
            <person name="Bingen E."/>
            <person name="Bonacorsi S."/>
            <person name="Bouchier C."/>
            <person name="Bouvet O."/>
            <person name="Calteau A."/>
            <person name="Chiapello H."/>
            <person name="Clermont O."/>
            <person name="Cruveiller S."/>
            <person name="Danchin A."/>
            <person name="Diard M."/>
            <person name="Dossat C."/>
            <person name="Karoui M.E."/>
            <person name="Frapy E."/>
            <person name="Garry L."/>
            <person name="Ghigo J.M."/>
            <person name="Gilles A.M."/>
            <person name="Johnson J."/>
            <person name="Le Bouguenec C."/>
            <person name="Lescat M."/>
            <person name="Mangenot S."/>
            <person name="Martinez-Jehanne V."/>
            <person name="Matic I."/>
            <person name="Nassif X."/>
            <person name="Oztas S."/>
            <person name="Petit M.A."/>
            <person name="Pichon C."/>
            <person name="Rouy Z."/>
            <person name="Ruf C.S."/>
            <person name="Schneider D."/>
            <person name="Tourret J."/>
            <person name="Vacherie B."/>
            <person name="Vallenet D."/>
            <person name="Medigue C."/>
            <person name="Rocha E.P.C."/>
            <person name="Denamur E."/>
        </authorList>
    </citation>
    <scope>NUCLEOTIDE SEQUENCE [LARGE SCALE GENOMIC DNA]</scope>
    <source>
        <strain>S88 / ExPEC</strain>
    </source>
</reference>
<feature type="chain" id="PRO_1000187068" description="2-succinyl-5-enolpyruvyl-6-hydroxy-3-cyclohexene-1-carboxylate synthase">
    <location>
        <begin position="1"/>
        <end position="556"/>
    </location>
</feature>
<comment type="function">
    <text evidence="1">Catalyzes the thiamine diphosphate-dependent decarboxylation of 2-oxoglutarate and the subsequent addition of the resulting succinic semialdehyde-thiamine pyrophosphate anion to isochorismate to yield 2-succinyl-5-enolpyruvyl-6-hydroxy-3-cyclohexene-1-carboxylate (SEPHCHC).</text>
</comment>
<comment type="catalytic activity">
    <reaction evidence="1">
        <text>isochorismate + 2-oxoglutarate + H(+) = 5-enolpyruvoyl-6-hydroxy-2-succinyl-cyclohex-3-ene-1-carboxylate + CO2</text>
        <dbReference type="Rhea" id="RHEA:25593"/>
        <dbReference type="ChEBI" id="CHEBI:15378"/>
        <dbReference type="ChEBI" id="CHEBI:16526"/>
        <dbReference type="ChEBI" id="CHEBI:16810"/>
        <dbReference type="ChEBI" id="CHEBI:29780"/>
        <dbReference type="ChEBI" id="CHEBI:58818"/>
        <dbReference type="EC" id="2.2.1.9"/>
    </reaction>
</comment>
<comment type="cofactor">
    <cofactor evidence="1">
        <name>Mg(2+)</name>
        <dbReference type="ChEBI" id="CHEBI:18420"/>
    </cofactor>
    <cofactor evidence="1">
        <name>Mn(2+)</name>
        <dbReference type="ChEBI" id="CHEBI:29035"/>
    </cofactor>
</comment>
<comment type="cofactor">
    <cofactor evidence="1">
        <name>thiamine diphosphate</name>
        <dbReference type="ChEBI" id="CHEBI:58937"/>
    </cofactor>
    <text evidence="1">Binds 1 thiamine pyrophosphate per subunit.</text>
</comment>
<comment type="pathway">
    <text evidence="1">Quinol/quinone metabolism; 1,4-dihydroxy-2-naphthoate biosynthesis; 1,4-dihydroxy-2-naphthoate from chorismate: step 2/7.</text>
</comment>
<comment type="pathway">
    <text evidence="1">Quinol/quinone metabolism; menaquinone biosynthesis.</text>
</comment>
<comment type="subunit">
    <text evidence="1">Homodimer.</text>
</comment>
<comment type="similarity">
    <text evidence="1">Belongs to the TPP enzyme family. MenD subfamily.</text>
</comment>